<organism>
    <name type="scientific">Mus musculus</name>
    <name type="common">Mouse</name>
    <dbReference type="NCBI Taxonomy" id="10090"/>
    <lineage>
        <taxon>Eukaryota</taxon>
        <taxon>Metazoa</taxon>
        <taxon>Chordata</taxon>
        <taxon>Craniata</taxon>
        <taxon>Vertebrata</taxon>
        <taxon>Euteleostomi</taxon>
        <taxon>Mammalia</taxon>
        <taxon>Eutheria</taxon>
        <taxon>Euarchontoglires</taxon>
        <taxon>Glires</taxon>
        <taxon>Rodentia</taxon>
        <taxon>Myomorpha</taxon>
        <taxon>Muroidea</taxon>
        <taxon>Muridae</taxon>
        <taxon>Murinae</taxon>
        <taxon>Mus</taxon>
        <taxon>Mus</taxon>
    </lineage>
</organism>
<dbReference type="EMBL" id="AK014894">
    <property type="protein sequence ID" value="BAB29609.1"/>
    <property type="molecule type" value="mRNA"/>
</dbReference>
<dbReference type="EMBL" id="AK030306">
    <property type="protein sequence ID" value="BAC26889.1"/>
    <property type="molecule type" value="mRNA"/>
</dbReference>
<dbReference type="EMBL" id="AK031955">
    <property type="protein sequence ID" value="BAC27621.1"/>
    <property type="molecule type" value="mRNA"/>
</dbReference>
<dbReference type="EMBL" id="AK046030">
    <property type="protein sequence ID" value="BAC32575.1"/>
    <property type="molecule type" value="mRNA"/>
</dbReference>
<dbReference type="EMBL" id="AK080305">
    <property type="protein sequence ID" value="BAC37872.1"/>
    <property type="molecule type" value="mRNA"/>
</dbReference>
<dbReference type="EMBL" id="BC075710">
    <property type="protein sequence ID" value="AAH75710.1"/>
    <property type="molecule type" value="mRNA"/>
</dbReference>
<dbReference type="CCDS" id="CCDS40638.2"/>
<dbReference type="RefSeq" id="NP_001155090.1">
    <property type="nucleotide sequence ID" value="NM_001161618.1"/>
</dbReference>
<dbReference type="RefSeq" id="NP_082083.3">
    <property type="nucleotide sequence ID" value="NM_027807.4"/>
</dbReference>
<dbReference type="PDB" id="2WZK">
    <property type="method" value="X-ray"/>
    <property type="resolution" value="2.05 A"/>
    <property type="chains" value="A=1-384"/>
</dbReference>
<dbReference type="PDBsum" id="2WZK"/>
<dbReference type="SMR" id="Q9D5V5"/>
<dbReference type="BioGRID" id="217689">
    <property type="interactions" value="56"/>
</dbReference>
<dbReference type="CORUM" id="Q9D5V5"/>
<dbReference type="FunCoup" id="Q9D5V5">
    <property type="interactions" value="3270"/>
</dbReference>
<dbReference type="IntAct" id="Q9D5V5">
    <property type="interactions" value="3"/>
</dbReference>
<dbReference type="MINT" id="Q9D5V5"/>
<dbReference type="STRING" id="10090.ENSMUSP00000034529"/>
<dbReference type="GlyGen" id="Q9D5V5">
    <property type="glycosylation" value="1 site, 1 O-linked glycan (1 site)"/>
</dbReference>
<dbReference type="iPTMnet" id="Q9D5V5"/>
<dbReference type="PhosphoSitePlus" id="Q9D5V5"/>
<dbReference type="SwissPalm" id="Q9D5V5"/>
<dbReference type="jPOST" id="Q9D5V5"/>
<dbReference type="PaxDb" id="10090-ENSMUSP00000034529"/>
<dbReference type="ProteomicsDB" id="284062"/>
<dbReference type="Pumba" id="Q9D5V5"/>
<dbReference type="DNASU" id="75717"/>
<dbReference type="GeneID" id="75717"/>
<dbReference type="KEGG" id="mmu:75717"/>
<dbReference type="UCSC" id="uc009pmj.1">
    <property type="organism name" value="mouse"/>
</dbReference>
<dbReference type="AGR" id="MGI:1922967"/>
<dbReference type="CTD" id="8065"/>
<dbReference type="MGI" id="MGI:1922967">
    <property type="gene designation" value="Cul5"/>
</dbReference>
<dbReference type="eggNOG" id="KOG2285">
    <property type="taxonomic scope" value="Eukaryota"/>
</dbReference>
<dbReference type="InParanoid" id="Q9D5V5"/>
<dbReference type="OrthoDB" id="27073at2759"/>
<dbReference type="PhylomeDB" id="Q9D5V5"/>
<dbReference type="Reactome" id="R-MMU-8863795">
    <property type="pathway name" value="Downregulation of ERBB2 signaling"/>
</dbReference>
<dbReference type="Reactome" id="R-MMU-8951664">
    <property type="pathway name" value="Neddylation"/>
</dbReference>
<dbReference type="Reactome" id="R-MMU-9705462">
    <property type="pathway name" value="Inactivation of CSF3 (G-CSF) signaling"/>
</dbReference>
<dbReference type="Reactome" id="R-MMU-983168">
    <property type="pathway name" value="Antigen processing: Ubiquitination &amp; Proteasome degradation"/>
</dbReference>
<dbReference type="UniPathway" id="UPA00143"/>
<dbReference type="BioGRID-ORCS" id="75717">
    <property type="hits" value="10 hits in 78 CRISPR screens"/>
</dbReference>
<dbReference type="ChiTaRS" id="Cul5">
    <property type="organism name" value="mouse"/>
</dbReference>
<dbReference type="EvolutionaryTrace" id="Q9D5V5"/>
<dbReference type="PRO" id="PR:Q9D5V5"/>
<dbReference type="Proteomes" id="UP000000589">
    <property type="component" value="Unplaced"/>
</dbReference>
<dbReference type="RNAct" id="Q9D5V5">
    <property type="molecule type" value="protein"/>
</dbReference>
<dbReference type="GO" id="GO:0031466">
    <property type="term" value="C:Cul5-RING ubiquitin ligase complex"/>
    <property type="evidence" value="ECO:0000315"/>
    <property type="project" value="UniProtKB"/>
</dbReference>
<dbReference type="GO" id="GO:0005829">
    <property type="term" value="C:cytosol"/>
    <property type="evidence" value="ECO:0000304"/>
    <property type="project" value="Reactome"/>
</dbReference>
<dbReference type="GO" id="GO:0005634">
    <property type="term" value="C:nucleus"/>
    <property type="evidence" value="ECO:0007669"/>
    <property type="project" value="UniProtKB-SubCell"/>
</dbReference>
<dbReference type="GO" id="GO:0090734">
    <property type="term" value="C:site of DNA damage"/>
    <property type="evidence" value="ECO:0000250"/>
    <property type="project" value="UniProtKB"/>
</dbReference>
<dbReference type="GO" id="GO:0160072">
    <property type="term" value="F:ubiquitin ligase complex scaffold activity"/>
    <property type="evidence" value="ECO:0000315"/>
    <property type="project" value="UniProtKB"/>
</dbReference>
<dbReference type="GO" id="GO:0031625">
    <property type="term" value="F:ubiquitin protein ligase binding"/>
    <property type="evidence" value="ECO:0007669"/>
    <property type="project" value="InterPro"/>
</dbReference>
<dbReference type="GO" id="GO:0021799">
    <property type="term" value="P:cerebral cortex radially oriented cell migration"/>
    <property type="evidence" value="ECO:0000315"/>
    <property type="project" value="MGI"/>
</dbReference>
<dbReference type="GO" id="GO:0043161">
    <property type="term" value="P:proteasome-mediated ubiquitin-dependent protein catabolic process"/>
    <property type="evidence" value="ECO:0000315"/>
    <property type="project" value="UniProtKB"/>
</dbReference>
<dbReference type="GO" id="GO:0016567">
    <property type="term" value="P:protein ubiquitination"/>
    <property type="evidence" value="ECO:0000316"/>
    <property type="project" value="MGI"/>
</dbReference>
<dbReference type="GO" id="GO:0021942">
    <property type="term" value="P:radial glia guided migration of Purkinje cell"/>
    <property type="evidence" value="ECO:0000315"/>
    <property type="project" value="MGI"/>
</dbReference>
<dbReference type="GO" id="GO:0038026">
    <property type="term" value="P:reelin-mediated signaling pathway"/>
    <property type="evidence" value="ECO:0000315"/>
    <property type="project" value="UniProtKB"/>
</dbReference>
<dbReference type="GO" id="GO:2001222">
    <property type="term" value="P:regulation of neuron migration"/>
    <property type="evidence" value="ECO:0000315"/>
    <property type="project" value="UniProtKB"/>
</dbReference>
<dbReference type="FunFam" id="1.10.10.10:FF:000142">
    <property type="entry name" value="Cullin 5"/>
    <property type="match status" value="1"/>
</dbReference>
<dbReference type="FunFam" id="1.20.1310.10:FF:000009">
    <property type="entry name" value="Cullin 5"/>
    <property type="match status" value="1"/>
</dbReference>
<dbReference type="FunFam" id="1.20.1310.10:FF:000014">
    <property type="entry name" value="Cullin 5"/>
    <property type="match status" value="1"/>
</dbReference>
<dbReference type="FunFam" id="1.20.1310.10:FF:000017">
    <property type="entry name" value="Cullin 5"/>
    <property type="match status" value="1"/>
</dbReference>
<dbReference type="FunFam" id="3.30.230.130:FF:000004">
    <property type="entry name" value="Cullin 5"/>
    <property type="match status" value="1"/>
</dbReference>
<dbReference type="Gene3D" id="1.20.1310.10">
    <property type="entry name" value="Cullin Repeats"/>
    <property type="match status" value="4"/>
</dbReference>
<dbReference type="Gene3D" id="3.30.230.130">
    <property type="entry name" value="Cullin, Chain C, Domain 2"/>
    <property type="match status" value="1"/>
</dbReference>
<dbReference type="Gene3D" id="1.10.10.10">
    <property type="entry name" value="Winged helix-like DNA-binding domain superfamily/Winged helix DNA-binding domain"/>
    <property type="match status" value="1"/>
</dbReference>
<dbReference type="InterPro" id="IPR045093">
    <property type="entry name" value="Cullin"/>
</dbReference>
<dbReference type="InterPro" id="IPR016157">
    <property type="entry name" value="Cullin_CS"/>
</dbReference>
<dbReference type="InterPro" id="IPR016158">
    <property type="entry name" value="Cullin_homology"/>
</dbReference>
<dbReference type="InterPro" id="IPR036317">
    <property type="entry name" value="Cullin_homology_sf"/>
</dbReference>
<dbReference type="InterPro" id="IPR001373">
    <property type="entry name" value="Cullin_N"/>
</dbReference>
<dbReference type="InterPro" id="IPR019559">
    <property type="entry name" value="Cullin_neddylation_domain"/>
</dbReference>
<dbReference type="InterPro" id="IPR016159">
    <property type="entry name" value="Cullin_repeat-like_dom_sf"/>
</dbReference>
<dbReference type="InterPro" id="IPR036388">
    <property type="entry name" value="WH-like_DNA-bd_sf"/>
</dbReference>
<dbReference type="InterPro" id="IPR036390">
    <property type="entry name" value="WH_DNA-bd_sf"/>
</dbReference>
<dbReference type="PANTHER" id="PTHR11932">
    <property type="entry name" value="CULLIN"/>
    <property type="match status" value="1"/>
</dbReference>
<dbReference type="Pfam" id="PF00888">
    <property type="entry name" value="Cullin"/>
    <property type="match status" value="1"/>
</dbReference>
<dbReference type="Pfam" id="PF10557">
    <property type="entry name" value="Cullin_Nedd8"/>
    <property type="match status" value="1"/>
</dbReference>
<dbReference type="SMART" id="SM00182">
    <property type="entry name" value="CULLIN"/>
    <property type="match status" value="1"/>
</dbReference>
<dbReference type="SMART" id="SM00884">
    <property type="entry name" value="Cullin_Nedd8"/>
    <property type="match status" value="1"/>
</dbReference>
<dbReference type="SUPFAM" id="SSF75632">
    <property type="entry name" value="Cullin homology domain"/>
    <property type="match status" value="1"/>
</dbReference>
<dbReference type="SUPFAM" id="SSF74788">
    <property type="entry name" value="Cullin repeat-like"/>
    <property type="match status" value="1"/>
</dbReference>
<dbReference type="SUPFAM" id="SSF46785">
    <property type="entry name" value="Winged helix' DNA-binding domain"/>
    <property type="match status" value="1"/>
</dbReference>
<dbReference type="PROSITE" id="PS01256">
    <property type="entry name" value="CULLIN_1"/>
    <property type="match status" value="1"/>
</dbReference>
<dbReference type="PROSITE" id="PS50069">
    <property type="entry name" value="CULLIN_2"/>
    <property type="match status" value="1"/>
</dbReference>
<reference key="1">
    <citation type="journal article" date="2005" name="Science">
        <title>The transcriptional landscape of the mammalian genome.</title>
        <authorList>
            <person name="Carninci P."/>
            <person name="Kasukawa T."/>
            <person name="Katayama S."/>
            <person name="Gough J."/>
            <person name="Frith M.C."/>
            <person name="Maeda N."/>
            <person name="Oyama R."/>
            <person name="Ravasi T."/>
            <person name="Lenhard B."/>
            <person name="Wells C."/>
            <person name="Kodzius R."/>
            <person name="Shimokawa K."/>
            <person name="Bajic V.B."/>
            <person name="Brenner S.E."/>
            <person name="Batalov S."/>
            <person name="Forrest A.R."/>
            <person name="Zavolan M."/>
            <person name="Davis M.J."/>
            <person name="Wilming L.G."/>
            <person name="Aidinis V."/>
            <person name="Allen J.E."/>
            <person name="Ambesi-Impiombato A."/>
            <person name="Apweiler R."/>
            <person name="Aturaliya R.N."/>
            <person name="Bailey T.L."/>
            <person name="Bansal M."/>
            <person name="Baxter L."/>
            <person name="Beisel K.W."/>
            <person name="Bersano T."/>
            <person name="Bono H."/>
            <person name="Chalk A.M."/>
            <person name="Chiu K.P."/>
            <person name="Choudhary V."/>
            <person name="Christoffels A."/>
            <person name="Clutterbuck D.R."/>
            <person name="Crowe M.L."/>
            <person name="Dalla E."/>
            <person name="Dalrymple B.P."/>
            <person name="de Bono B."/>
            <person name="Della Gatta G."/>
            <person name="di Bernardo D."/>
            <person name="Down T."/>
            <person name="Engstrom P."/>
            <person name="Fagiolini M."/>
            <person name="Faulkner G."/>
            <person name="Fletcher C.F."/>
            <person name="Fukushima T."/>
            <person name="Furuno M."/>
            <person name="Futaki S."/>
            <person name="Gariboldi M."/>
            <person name="Georgii-Hemming P."/>
            <person name="Gingeras T.R."/>
            <person name="Gojobori T."/>
            <person name="Green R.E."/>
            <person name="Gustincich S."/>
            <person name="Harbers M."/>
            <person name="Hayashi Y."/>
            <person name="Hensch T.K."/>
            <person name="Hirokawa N."/>
            <person name="Hill D."/>
            <person name="Huminiecki L."/>
            <person name="Iacono M."/>
            <person name="Ikeo K."/>
            <person name="Iwama A."/>
            <person name="Ishikawa T."/>
            <person name="Jakt M."/>
            <person name="Kanapin A."/>
            <person name="Katoh M."/>
            <person name="Kawasawa Y."/>
            <person name="Kelso J."/>
            <person name="Kitamura H."/>
            <person name="Kitano H."/>
            <person name="Kollias G."/>
            <person name="Krishnan S.P."/>
            <person name="Kruger A."/>
            <person name="Kummerfeld S.K."/>
            <person name="Kurochkin I.V."/>
            <person name="Lareau L.F."/>
            <person name="Lazarevic D."/>
            <person name="Lipovich L."/>
            <person name="Liu J."/>
            <person name="Liuni S."/>
            <person name="McWilliam S."/>
            <person name="Madan Babu M."/>
            <person name="Madera M."/>
            <person name="Marchionni L."/>
            <person name="Matsuda H."/>
            <person name="Matsuzawa S."/>
            <person name="Miki H."/>
            <person name="Mignone F."/>
            <person name="Miyake S."/>
            <person name="Morris K."/>
            <person name="Mottagui-Tabar S."/>
            <person name="Mulder N."/>
            <person name="Nakano N."/>
            <person name="Nakauchi H."/>
            <person name="Ng P."/>
            <person name="Nilsson R."/>
            <person name="Nishiguchi S."/>
            <person name="Nishikawa S."/>
            <person name="Nori F."/>
            <person name="Ohara O."/>
            <person name="Okazaki Y."/>
            <person name="Orlando V."/>
            <person name="Pang K.C."/>
            <person name="Pavan W.J."/>
            <person name="Pavesi G."/>
            <person name="Pesole G."/>
            <person name="Petrovsky N."/>
            <person name="Piazza S."/>
            <person name="Reed J."/>
            <person name="Reid J.F."/>
            <person name="Ring B.Z."/>
            <person name="Ringwald M."/>
            <person name="Rost B."/>
            <person name="Ruan Y."/>
            <person name="Salzberg S.L."/>
            <person name="Sandelin A."/>
            <person name="Schneider C."/>
            <person name="Schoenbach C."/>
            <person name="Sekiguchi K."/>
            <person name="Semple C.A."/>
            <person name="Seno S."/>
            <person name="Sessa L."/>
            <person name="Sheng Y."/>
            <person name="Shibata Y."/>
            <person name="Shimada H."/>
            <person name="Shimada K."/>
            <person name="Silva D."/>
            <person name="Sinclair B."/>
            <person name="Sperling S."/>
            <person name="Stupka E."/>
            <person name="Sugiura K."/>
            <person name="Sultana R."/>
            <person name="Takenaka Y."/>
            <person name="Taki K."/>
            <person name="Tammoja K."/>
            <person name="Tan S.L."/>
            <person name="Tang S."/>
            <person name="Taylor M.S."/>
            <person name="Tegner J."/>
            <person name="Teichmann S.A."/>
            <person name="Ueda H.R."/>
            <person name="van Nimwegen E."/>
            <person name="Verardo R."/>
            <person name="Wei C.L."/>
            <person name="Yagi K."/>
            <person name="Yamanishi H."/>
            <person name="Zabarovsky E."/>
            <person name="Zhu S."/>
            <person name="Zimmer A."/>
            <person name="Hide W."/>
            <person name="Bult C."/>
            <person name="Grimmond S.M."/>
            <person name="Teasdale R.D."/>
            <person name="Liu E.T."/>
            <person name="Brusic V."/>
            <person name="Quackenbush J."/>
            <person name="Wahlestedt C."/>
            <person name="Mattick J.S."/>
            <person name="Hume D.A."/>
            <person name="Kai C."/>
            <person name="Sasaki D."/>
            <person name="Tomaru Y."/>
            <person name="Fukuda S."/>
            <person name="Kanamori-Katayama M."/>
            <person name="Suzuki M."/>
            <person name="Aoki J."/>
            <person name="Arakawa T."/>
            <person name="Iida J."/>
            <person name="Imamura K."/>
            <person name="Itoh M."/>
            <person name="Kato T."/>
            <person name="Kawaji H."/>
            <person name="Kawagashira N."/>
            <person name="Kawashima T."/>
            <person name="Kojima M."/>
            <person name="Kondo S."/>
            <person name="Konno H."/>
            <person name="Nakano K."/>
            <person name="Ninomiya N."/>
            <person name="Nishio T."/>
            <person name="Okada M."/>
            <person name="Plessy C."/>
            <person name="Shibata K."/>
            <person name="Shiraki T."/>
            <person name="Suzuki S."/>
            <person name="Tagami M."/>
            <person name="Waki K."/>
            <person name="Watahiki A."/>
            <person name="Okamura-Oho Y."/>
            <person name="Suzuki H."/>
            <person name="Kawai J."/>
            <person name="Hayashizaki Y."/>
        </authorList>
    </citation>
    <scope>NUCLEOTIDE SEQUENCE [LARGE SCALE MRNA]</scope>
    <source>
        <strain>C57BL/6J</strain>
        <tissue>Brain</tissue>
        <tissue>Medulla oblongata</tissue>
        <tissue>Ovary</tissue>
        <tissue>Testis</tissue>
        <tissue>Uterus</tissue>
    </source>
</reference>
<reference key="2">
    <citation type="journal article" date="2004" name="Genome Res.">
        <title>The status, quality, and expansion of the NIH full-length cDNA project: the Mammalian Gene Collection (MGC).</title>
        <authorList>
            <consortium name="The MGC Project Team"/>
        </authorList>
    </citation>
    <scope>NUCLEOTIDE SEQUENCE [LARGE SCALE MRNA]</scope>
    <source>
        <tissue>Olfactory epithelium</tissue>
    </source>
</reference>
<reference key="3">
    <citation type="journal article" date="2007" name="Genes Dev.">
        <title>Cullin 5 regulates Dab1 protein levels and neuron positioning during cortical development.</title>
        <authorList>
            <person name="Feng L."/>
            <person name="Allen N.S."/>
            <person name="Simo S."/>
            <person name="Cooper J.A."/>
        </authorList>
    </citation>
    <scope>FUNCTION</scope>
    <scope>PATHWAY</scope>
    <scope>IDENTIFICATION IN VARIOUS ECS(SOCS7) COMPLEXES</scope>
</reference>
<reference key="4">
    <citation type="journal article" date="2010" name="Cell">
        <title>A tissue-specific atlas of mouse protein phosphorylation and expression.</title>
        <authorList>
            <person name="Huttlin E.L."/>
            <person name="Jedrychowski M.P."/>
            <person name="Elias J.E."/>
            <person name="Goswami T."/>
            <person name="Rad R."/>
            <person name="Beausoleil S.A."/>
            <person name="Villen J."/>
            <person name="Haas W."/>
            <person name="Sowa M.E."/>
            <person name="Gygi S.P."/>
        </authorList>
    </citation>
    <scope>IDENTIFICATION BY MASS SPECTROMETRY [LARGE SCALE ANALYSIS]</scope>
    <source>
        <tissue>Brain</tissue>
        <tissue>Brown adipose tissue</tissue>
        <tissue>Heart</tissue>
        <tissue>Kidney</tissue>
        <tissue>Liver</tissue>
        <tissue>Lung</tissue>
        <tissue>Pancreas</tissue>
        <tissue>Spleen</tissue>
        <tissue>Testis</tissue>
    </source>
</reference>
<reference key="5">
    <citation type="journal article" date="2013" name="Dev. Cell">
        <title>Rbx2 regulates neuronal migration through different cullin 5-RING ligase adaptors.</title>
        <authorList>
            <person name="Simo S."/>
            <person name="Cooper J.A."/>
        </authorList>
    </citation>
    <scope>FUNCTION</scope>
    <scope>PATHWAY</scope>
    <scope>IDENTIFICATION IN THE ECS(SOCS7) COMPLEX</scope>
</reference>
<reference key="6">
    <citation type="journal article" date="2013" name="J. Mol. Biol.">
        <title>Molecular architecture of the ankyrin SOCS box family of Cul5-dependent E3 ubiquitin ligases.</title>
        <authorList>
            <person name="Muniz J.R."/>
            <person name="Guo K."/>
            <person name="Kershaw N.J."/>
            <person name="Ayinampudi V."/>
            <person name="von Delft F."/>
            <person name="Babon J.J."/>
            <person name="Bullock A.N."/>
        </authorList>
    </citation>
    <scope>X-RAY CRYSTALLOGRAPHY (2.05 ANGSTROMS) OF 1-384</scope>
    <scope>FUNCTION</scope>
    <scope>PATHWAY</scope>
</reference>
<accession>Q9D5V5</accession>
<accession>Q8BMQ6</accession>
<accession>Q8BV53</accession>
<accession>Q8C098</accession>
<feature type="chain" id="PRO_0000119798" description="Cullin-5">
    <location>
        <begin position="1"/>
        <end position="780"/>
    </location>
</feature>
<feature type="domain" description="Cullin neddylation" evidence="3">
    <location>
        <begin position="711"/>
        <end position="772"/>
    </location>
</feature>
<feature type="modified residue" description="Phosphoserine" evidence="2">
    <location>
        <position position="34"/>
    </location>
</feature>
<feature type="modified residue" description="Phosphothreonine" evidence="2">
    <location>
        <position position="210"/>
    </location>
</feature>
<feature type="cross-link" description="Glycyl lysine isopeptide (Lys-Gly) (interchain with G-Cter in NEDD8)" evidence="1">
    <location>
        <position position="724"/>
    </location>
</feature>
<feature type="sequence conflict" description="In Ref. 1; BAC27621." evidence="9" ref="1">
    <original>W</original>
    <variation>C</variation>
    <location>
        <position position="573"/>
    </location>
</feature>
<feature type="helix" evidence="11">
    <location>
        <begin position="15"/>
        <end position="31"/>
    </location>
</feature>
<feature type="helix" evidence="11">
    <location>
        <begin position="37"/>
        <end position="53"/>
    </location>
</feature>
<feature type="helix" evidence="11">
    <location>
        <begin position="57"/>
        <end position="81"/>
    </location>
</feature>
<feature type="helix" evidence="11">
    <location>
        <begin position="86"/>
        <end position="103"/>
    </location>
</feature>
<feature type="turn" evidence="11">
    <location>
        <begin position="104"/>
        <end position="108"/>
    </location>
</feature>
<feature type="helix" evidence="11">
    <location>
        <begin position="109"/>
        <end position="111"/>
    </location>
</feature>
<feature type="helix" evidence="11">
    <location>
        <begin position="112"/>
        <end position="115"/>
    </location>
</feature>
<feature type="helix" evidence="11">
    <location>
        <begin position="134"/>
        <end position="146"/>
    </location>
</feature>
<feature type="helix" evidence="11">
    <location>
        <begin position="148"/>
        <end position="167"/>
    </location>
</feature>
<feature type="helix" evidence="11">
    <location>
        <begin position="175"/>
        <end position="186"/>
    </location>
</feature>
<feature type="helix" evidence="11">
    <location>
        <begin position="196"/>
        <end position="200"/>
    </location>
</feature>
<feature type="helix" evidence="11">
    <location>
        <begin position="202"/>
        <end position="248"/>
    </location>
</feature>
<feature type="helix" evidence="11">
    <location>
        <begin position="257"/>
        <end position="269"/>
    </location>
</feature>
<feature type="helix" evidence="11">
    <location>
        <begin position="271"/>
        <end position="273"/>
    </location>
</feature>
<feature type="helix" evidence="11">
    <location>
        <begin position="274"/>
        <end position="278"/>
    </location>
</feature>
<feature type="helix" evidence="11">
    <location>
        <begin position="281"/>
        <end position="286"/>
    </location>
</feature>
<feature type="helix" evidence="11">
    <location>
        <begin position="290"/>
        <end position="300"/>
    </location>
</feature>
<feature type="helix" evidence="11">
    <location>
        <begin position="308"/>
        <end position="329"/>
    </location>
</feature>
<feature type="helix" evidence="11">
    <location>
        <begin position="330"/>
        <end position="332"/>
    </location>
</feature>
<feature type="turn" evidence="11">
    <location>
        <begin position="333"/>
        <end position="335"/>
    </location>
</feature>
<feature type="helix" evidence="11">
    <location>
        <begin position="337"/>
        <end position="359"/>
    </location>
</feature>
<feature type="helix" evidence="11">
    <location>
        <begin position="363"/>
        <end position="382"/>
    </location>
</feature>
<comment type="function">
    <text evidence="2 5 6 7">Core component of multiple cullin-5-RING E3 ubiquitin-protein ligase complexes (ECS complexes, also named CRL5 complexes), which mediate the ubiquitination and subsequent proteasomal degradation of target proteins (PubMed:17974915, PubMed:23806657, PubMed:24210661). Acts a scaffold protein that contributes to catalysis through positioning of the substrate and the ubiquitin-conjugating enzyme (By similarity). The functional specificity of the E3 ubiquitin-protein ligase complex depends on the variable SOCS box-containing substrate recognition component (By similarity). Acts as a key regulator of neuron positioning during cortex development: component of various SOCS-containing ECS complexes, such as the ECS(SOCS7) complex, that regulate reelin signaling by mediating ubiquitination and degradation of DAB1 (PubMed:17974915, PubMed:24210661). ECS(SOCS1) seems to direct ubiquitination of JAK2 (By similarity). The ECS(SOCS2) complex mediates the ubiquitination and subsequent proteasomal degradation of phosphorylated EPOR and GHR (By similarity). The ECS(SPSB3) complex catalyzes ubiquitination of nuclear CGAS (By similarity). ECS(KLHDC1) complex is part of the DesCEND (destruction via C-end degrons) pathway and mediates ubiquitination and degradation of truncated SELENOS selenoprotein produced by failed UGA/Sec decoding, which ends with a glycine (By similarity). The ECS(ASB9) complex mediates ubiquitination and degradation of CKB (By similarity). As part of some ECS complex, promotes 'Lys-11'-linked ubiquitination and degradation of BTRC (By similarity). As part of a multisubunit ECS complex, polyubiquitinates monoubiquitinated POLR2A. As part of the ECS(RAB40C) complex, mediates ANKRD28 ubiquitination and degradation, thereby regulating protein phosphatase 6 (PP6) complex activity and focal adhesion assembly during cell migration (By similarity). As part of the ECS(RAB40A) complex, mediates RHOU 'Lys-48'-linked ubiquitination and degradation, thus inhibiting focal adhesion disassembly during cell migration (By similarity). As part of the ECS(RAB40B) complex, mediates LIMA1/EPLIN and RAP2 ubiquitination, thereby regulating actin cytoskeleton dynamics and stress fiber formation during cell migration (By similarity). May form a cell surface vasopressin receptor (By similarity).</text>
</comment>
<comment type="pathway">
    <text evidence="5 6 7">Protein modification; protein ubiquitination.</text>
</comment>
<comment type="subunit">
    <text evidence="2 5 6 7">Component of multiple cullin-5-RING E3 ubiquitin-protein ligase complexes (ECS complexes, also named CRL5 complexes) formed of CUL5, Elongin BC (ELOB and ELOC), RNF7/RBX2 and a variable SOCS box domain-containing protein as substrate-specific recognition component (PubMed:17974915, PubMed:23806657, PubMed:24210661). CUL5-containing ECS complexes specifically contain RNF7/RBX2, and not RBX1, as catalytic subunit (By similarity). Component of the ECS(ASB2) complex with the substrate recognition component ASB2 (By similarity). Component of the ECS(ASB6) complex with the substrate recognition component ASB6 (By similarity). Component of the ECS(ASB7) complex with the substrate recognition component ASB7 (By similarity). Component of the ECS(ASB9) complex with the substrate recognition component ASB9 (By similarity). Component of the ECS(ASB11) complex with the substrate recognition component ASB11 (By similarity). Component of the ECS(ASB12) complex with the substrate recognition component ASB12 (By similarity). Component of the ECS(LRRC41) complex with the substrate recognition component LRRC41 (By similarity). Component of the ECS(SOCS1) complex with the substrate recognition component SOCS1 (By similarity). Component of the ECS(SOCS2) complex with the substrate recognition component SOCS2 (By similarity). Component of the ECS(WSB1) complex with the substrate recognition subunit WSB1 (By similarity). Component of the ECS(SOCS3) complex with the substrate recognition component SOCS3 (By similarity). Component of the ECS(SOCS7) complex with the substrate recognition component SOCS7 (PubMed:24210661). Component of the ECS(SPSB1) complex with the substrate recognition component SPSB1 (By similarity). Component of the ECS(SPSB3) complex with the substrate recognition component SPSB3 (By similarity). Component of the ECS(SPSB2) complex with the substrate recognition component SPSB2 (By similarity). Component of the ECS(SPSB4) complex with the substrate recognition component SPSB4 (By similarity). Component of the ECS(RAB40) complex with the substrate recognition subunit RAB40A, RAB40B or RAB40C (By similarity). Component of the ECS(KLHDC1) complex with the substrate recognition component KLHDC1 (By similarity). Component of the ECS(PCMTD1) complex with the substrate recognition subunit PCMTD1 (By similarity). May also form complexes containing RBX1 and ELOA or VHL; additional evidence is however required to confirm this result in vivo (By similarity). Interacts (when neddylated) with ARIH2; leading to activate the E3 ligase activity of ARIH2 (By similarity). Interacts with ERCC6; the interaction is induced by DNA damaging agents or inhibitors of RNA polymerase II elongation (By similarity). Interacts with ELOA (via the BC-box) (By similarity). Interacts (unneddylated form) with DCUN1D1, DCUN1D2, DCUN1D3, DCUN1D4 and DCUN1D5; these interactions promote the cullin neddylation (By similarity).</text>
</comment>
<comment type="subcellular location">
    <subcellularLocation>
        <location evidence="2">Nucleus</location>
    </subcellularLocation>
    <text evidence="2">Localizes to sites of DNA damage in a UBAP2 and UBAP2L-dependent manner.</text>
</comment>
<comment type="PTM">
    <text evidence="2">Neddylated; which enhances the ubiquitination activity of ECS complexes and prevents binding of the inhibitor CAND1. Deneddylated via its interaction with the COP9 signalosome (CSN).</text>
</comment>
<comment type="similarity">
    <text evidence="4">Belongs to the cullin family.</text>
</comment>
<gene>
    <name evidence="8 10" type="primary">Cul5</name>
</gene>
<evidence type="ECO:0000250" key="1">
    <source>
        <dbReference type="UniProtKB" id="Q13616"/>
    </source>
</evidence>
<evidence type="ECO:0000250" key="2">
    <source>
        <dbReference type="UniProtKB" id="Q93034"/>
    </source>
</evidence>
<evidence type="ECO:0000255" key="3"/>
<evidence type="ECO:0000255" key="4">
    <source>
        <dbReference type="PROSITE-ProRule" id="PRU00330"/>
    </source>
</evidence>
<evidence type="ECO:0000269" key="5">
    <source>
    </source>
</evidence>
<evidence type="ECO:0000269" key="6">
    <source>
    </source>
</evidence>
<evidence type="ECO:0000269" key="7">
    <source>
    </source>
</evidence>
<evidence type="ECO:0000303" key="8">
    <source>
    </source>
</evidence>
<evidence type="ECO:0000305" key="9"/>
<evidence type="ECO:0000312" key="10">
    <source>
        <dbReference type="MGI" id="MGI:1922967"/>
    </source>
</evidence>
<evidence type="ECO:0007829" key="11">
    <source>
        <dbReference type="PDB" id="2WZK"/>
    </source>
</evidence>
<protein>
    <recommendedName>
        <fullName evidence="9">Cullin-5</fullName>
        <shortName evidence="9">CUL-5</shortName>
    </recommendedName>
</protein>
<proteinExistence type="evidence at protein level"/>
<name>CUL5_MOUSE</name>
<sequence length="780" mass="90974">MATSNLLKNKGSLQFEDKWDFMHPIVLKLLRQESVTKQQWFDLFSDVHAVCLWDDKGSSKIHQALKEDILEFIKQAQARVLSHQDDTALLKAYIVEWRKFFTQCDILPKPFCQLEVTLLGKQSSNKKSNMEDSIVRKLMLDTWNESIFSNIKNRLQDSAMKLVHAERLGEAFDSQLVIGVRESYVNLCSNPEDKLQIYRDNFEKAYLDSTERFYRTQAPSYLQQNGVQNYMKYADAKLKEEEKRALRYLETRRECNSVEALMECCVNALVTSFKETILAECQGMIKRNETEKLHLMFSLMDKVPNGIEPMLKDLEEHIISAGLADMVAAAETITTDSEKYVEQLLTLFNRFSKLVKEAFQDDPRFLTARDKAYKAVVNDATIFKLELPLKQKGVGLKTQPESKCPELLANYCDMLLRKTPLSKKLTSEEIEAKLKEVLLVLKYVQNKDVFMRYHKAHLTRRLILDISADSEIEENMVEWLREVGMPADYVNKLARMFQDIKVSEDLNQAFKEMHKNNKLALPADSVNIKILNAGAWSRSSEKVFVSLPTELEDLIPEVEEFYKKNHSGRKLHWHHLMSNGIITFKNEVGQYDLEVTTFQLAVLFAWNQRPREKISFENLKLATELPDAELRRTLWSLVAFPKLKRQVLLYDPQVNSPKDFTEGTLFSVNQDFSLIKNAKVQKRGKINLIGRLQLTTERMREEENEGIVQLRILRTQEAIIQIMKMRKKISNAQLQTELVEILKNMFLPQKKMIKEQMEWLIEHRYIRRDEADINTFIYMA</sequence>
<keyword id="KW-0002">3D-structure</keyword>
<keyword id="KW-1017">Isopeptide bond</keyword>
<keyword id="KW-0539">Nucleus</keyword>
<keyword id="KW-0597">Phosphoprotein</keyword>
<keyword id="KW-1185">Reference proteome</keyword>
<keyword id="KW-0832">Ubl conjugation</keyword>
<keyword id="KW-0833">Ubl conjugation pathway</keyword>